<accession>P9WIK6</accession>
<accession>L0TDW1</accession>
<accession>Q79F94</accession>
<accession>Q7D4T4</accession>
<evidence type="ECO:0000250" key="1">
    <source>
        <dbReference type="UniProtKB" id="P9WIK7"/>
    </source>
</evidence>
<evidence type="ECO:0000305" key="2"/>
<organism>
    <name type="scientific">Mycobacterium tuberculosis (strain CDC 1551 / Oshkosh)</name>
    <dbReference type="NCBI Taxonomy" id="83331"/>
    <lineage>
        <taxon>Bacteria</taxon>
        <taxon>Bacillati</taxon>
        <taxon>Actinomycetota</taxon>
        <taxon>Actinomycetes</taxon>
        <taxon>Mycobacteriales</taxon>
        <taxon>Mycobacteriaceae</taxon>
        <taxon>Mycobacterium</taxon>
        <taxon>Mycobacterium tuberculosis complex</taxon>
    </lineage>
</organism>
<sequence>MFSITTLRDWTPDPGSIICWHASPTAKAKARQAPISEVPPSYQQAQHLRRYRDHVARGLDMSRLMIFTWDLPGRCNIRAMNYAINAHLRRHDTYHSWFEFDNAEHIVRHTIADPADIEVVQAEHQNMTSAELRHHIATPQPLQWDCFLFGIIQSDDHFTFYASIAHLCVDPMIVGVLFIEIHMMYSALVGGDPPIELPPAGRYDDHCVRQYADTAALTLDSARVRRWVEFAANNDGTLPHFPLPLGDLSVPHTGKLLTETLMDEQQGERFEAACVAAGARFSGGVFACAALAERELTNCETFDVVTTTDTRRTPTELRTTGWFTGLVPITVPVASGLFDSAARVAQISFDSGKDLATVPFDRVLELARPETGLRPPRPGNFVMSFLDASIAPLSTVANSDLNFRIYDEGRVSHQVSMWVNRYQHQTTVTVLFPDNPIASESVANYIAAMKSIYIRTADGTLATLKPGT</sequence>
<dbReference type="EC" id="2.3.1.288" evidence="1"/>
<dbReference type="EMBL" id="AE000516">
    <property type="protein sequence ID" value="AAK48295.1"/>
    <property type="molecule type" value="Genomic_DNA"/>
</dbReference>
<dbReference type="PIR" id="H70521">
    <property type="entry name" value="H70521"/>
</dbReference>
<dbReference type="RefSeq" id="WP_003899707.1">
    <property type="nucleotide sequence ID" value="NZ_KK341227.1"/>
</dbReference>
<dbReference type="SMR" id="P9WIK6"/>
<dbReference type="KEGG" id="mtc:MT3928"/>
<dbReference type="PATRIC" id="fig|83331.31.peg.4225"/>
<dbReference type="HOGENOM" id="CLU_034647_0_0_11"/>
<dbReference type="Proteomes" id="UP000001020">
    <property type="component" value="Chromosome"/>
</dbReference>
<dbReference type="GO" id="GO:0016746">
    <property type="term" value="F:acyltransferase activity"/>
    <property type="evidence" value="ECO:0007669"/>
    <property type="project" value="UniProtKB-KW"/>
</dbReference>
<dbReference type="GO" id="GO:0071555">
    <property type="term" value="P:cell wall organization"/>
    <property type="evidence" value="ECO:0007669"/>
    <property type="project" value="UniProtKB-KW"/>
</dbReference>
<dbReference type="GO" id="GO:0008610">
    <property type="term" value="P:lipid biosynthetic process"/>
    <property type="evidence" value="ECO:0007669"/>
    <property type="project" value="UniProtKB-ARBA"/>
</dbReference>
<dbReference type="FunFam" id="3.30.559.10:FF:000022">
    <property type="entry name" value="Trehalose-2-sulfate acyltransferase papA2"/>
    <property type="match status" value="1"/>
</dbReference>
<dbReference type="FunFam" id="3.30.559.30:FF:000007">
    <property type="entry name" value="Trehalose-2-sulfate acyltransferase papA2"/>
    <property type="match status" value="1"/>
</dbReference>
<dbReference type="Gene3D" id="3.30.559.10">
    <property type="entry name" value="Chloramphenicol acetyltransferase-like domain"/>
    <property type="match status" value="1"/>
</dbReference>
<dbReference type="Gene3D" id="3.30.559.30">
    <property type="entry name" value="Nonribosomal peptide synthetase, condensation domain"/>
    <property type="match status" value="1"/>
</dbReference>
<dbReference type="InterPro" id="IPR023213">
    <property type="entry name" value="CAT-like_dom_sf"/>
</dbReference>
<dbReference type="InterPro" id="IPR001242">
    <property type="entry name" value="Condensatn"/>
</dbReference>
<dbReference type="Pfam" id="PF00668">
    <property type="entry name" value="Condensation"/>
    <property type="match status" value="1"/>
</dbReference>
<dbReference type="SUPFAM" id="SSF52777">
    <property type="entry name" value="CoA-dependent acyltransferases"/>
    <property type="match status" value="2"/>
</dbReference>
<reference key="1">
    <citation type="journal article" date="2002" name="J. Bacteriol.">
        <title>Whole-genome comparison of Mycobacterium tuberculosis clinical and laboratory strains.</title>
        <authorList>
            <person name="Fleischmann R.D."/>
            <person name="Alland D."/>
            <person name="Eisen J.A."/>
            <person name="Carpenter L."/>
            <person name="White O."/>
            <person name="Peterson J.D."/>
            <person name="DeBoy R.T."/>
            <person name="Dodson R.J."/>
            <person name="Gwinn M.L."/>
            <person name="Haft D.H."/>
            <person name="Hickey E.K."/>
            <person name="Kolonay J.F."/>
            <person name="Nelson W.C."/>
            <person name="Umayam L.A."/>
            <person name="Ermolaeva M.D."/>
            <person name="Salzberg S.L."/>
            <person name="Delcher A."/>
            <person name="Utterback T.R."/>
            <person name="Weidman J.F."/>
            <person name="Khouri H.M."/>
            <person name="Gill J."/>
            <person name="Mikula A."/>
            <person name="Bishai W."/>
            <person name="Jacobs W.R. Jr."/>
            <person name="Venter J.C."/>
            <person name="Fraser C.M."/>
        </authorList>
    </citation>
    <scope>NUCLEOTIDE SEQUENCE [LARGE SCALE GENOMIC DNA]</scope>
    <source>
        <strain>CDC 1551 / Oshkosh</strain>
    </source>
</reference>
<keyword id="KW-0012">Acyltransferase</keyword>
<keyword id="KW-0961">Cell wall biogenesis/degradation</keyword>
<keyword id="KW-0444">Lipid biosynthesis</keyword>
<keyword id="KW-0443">Lipid metabolism</keyword>
<keyword id="KW-1185">Reference proteome</keyword>
<keyword id="KW-0808">Transferase</keyword>
<protein>
    <recommendedName>
        <fullName evidence="1">Trehalose-2-sulfate acyltransferase PapA2</fullName>
        <ecNumber evidence="1">2.3.1.288</ecNumber>
    </recommendedName>
    <alternativeName>
        <fullName evidence="1">2-O-sulfo trehalose long-chain-acyltransferase</fullName>
    </alternativeName>
    <alternativeName>
        <fullName>Polyketide synthase-associated protein A2</fullName>
    </alternativeName>
</protein>
<gene>
    <name type="primary">papA2</name>
    <name type="ordered locus">MT3928</name>
</gene>
<proteinExistence type="inferred from homology"/>
<comment type="function">
    <text evidence="1">Required for the biosynthesis of sulfolipid-1 (SL-1), a major mycobacterial cell wall lipid. Catalyzes the acylation of trehalose-2-sulfate by adding the palmitoyl group at the 2'-position to yield the intermediate trehalose-2-sulfate-2'-palmitate (SL659).</text>
</comment>
<comment type="catalytic activity">
    <reaction evidence="1">
        <text>2-O-sulfo-alpha,alpha-trehalose + hexadecanoyl-CoA = 2-O-sulfo-2'-O-hexadecanoyl-alpha,alpha-trehalose + CoA</text>
        <dbReference type="Rhea" id="RHEA:44060"/>
        <dbReference type="ChEBI" id="CHEBI:57287"/>
        <dbReference type="ChEBI" id="CHEBI:57379"/>
        <dbReference type="ChEBI" id="CHEBI:60091"/>
        <dbReference type="ChEBI" id="CHEBI:60092"/>
        <dbReference type="EC" id="2.3.1.288"/>
    </reaction>
    <physiologicalReaction direction="left-to-right" evidence="1">
        <dbReference type="Rhea" id="RHEA:44061"/>
    </physiologicalReaction>
</comment>
<comment type="similarity">
    <text evidence="2">Belongs to the PapA acyltransferase family.</text>
</comment>
<name>PAPA2_MYCTO</name>
<feature type="chain" id="PRO_0000427990" description="Trehalose-2-sulfate acyltransferase PapA2">
    <location>
        <begin position="1"/>
        <end position="468"/>
    </location>
</feature>